<organism>
    <name type="scientific">Vibrio vulnificus (strain CMCP6)</name>
    <dbReference type="NCBI Taxonomy" id="216895"/>
    <lineage>
        <taxon>Bacteria</taxon>
        <taxon>Pseudomonadati</taxon>
        <taxon>Pseudomonadota</taxon>
        <taxon>Gammaproteobacteria</taxon>
        <taxon>Vibrionales</taxon>
        <taxon>Vibrionaceae</taxon>
        <taxon>Vibrio</taxon>
    </lineage>
</organism>
<reference key="1">
    <citation type="submission" date="2002-12" db="EMBL/GenBank/DDBJ databases">
        <title>Complete genome sequence of Vibrio vulnificus CMCP6.</title>
        <authorList>
            <person name="Rhee J.H."/>
            <person name="Kim S.Y."/>
            <person name="Chung S.S."/>
            <person name="Kim J.J."/>
            <person name="Moon Y.H."/>
            <person name="Jeong H."/>
            <person name="Choy H.E."/>
        </authorList>
    </citation>
    <scope>NUCLEOTIDE SEQUENCE [LARGE SCALE GENOMIC DNA]</scope>
    <source>
        <strain>CMCP6</strain>
    </source>
</reference>
<comment type="similarity">
    <text evidence="1">Belongs to the elongation factor P family.</text>
</comment>
<protein>
    <recommendedName>
        <fullName evidence="1">Elongation factor P-like protein</fullName>
    </recommendedName>
</protein>
<name>EFPL_VIBVU</name>
<accession>Q8D8C2</accession>
<feature type="chain" id="PRO_0000094391" description="Elongation factor P-like protein">
    <location>
        <begin position="1"/>
        <end position="188"/>
    </location>
</feature>
<dbReference type="EMBL" id="AE016795">
    <property type="protein sequence ID" value="AAO11382.1"/>
    <property type="molecule type" value="Genomic_DNA"/>
</dbReference>
<dbReference type="SMR" id="Q8D8C2"/>
<dbReference type="KEGG" id="vvu:VV1_3058"/>
<dbReference type="HOGENOM" id="CLU_074944_2_0_6"/>
<dbReference type="Proteomes" id="UP000002275">
    <property type="component" value="Chromosome 1"/>
</dbReference>
<dbReference type="GO" id="GO:0005737">
    <property type="term" value="C:cytoplasm"/>
    <property type="evidence" value="ECO:0007669"/>
    <property type="project" value="InterPro"/>
</dbReference>
<dbReference type="GO" id="GO:0003746">
    <property type="term" value="F:translation elongation factor activity"/>
    <property type="evidence" value="ECO:0007669"/>
    <property type="project" value="UniProtKB-UniRule"/>
</dbReference>
<dbReference type="GO" id="GO:0043043">
    <property type="term" value="P:peptide biosynthetic process"/>
    <property type="evidence" value="ECO:0007669"/>
    <property type="project" value="InterPro"/>
</dbReference>
<dbReference type="CDD" id="cd04470">
    <property type="entry name" value="S1_EF-P_repeat_1"/>
    <property type="match status" value="1"/>
</dbReference>
<dbReference type="CDD" id="cd05794">
    <property type="entry name" value="S1_EF-P_repeat_2"/>
    <property type="match status" value="1"/>
</dbReference>
<dbReference type="FunFam" id="2.40.50.140:FF:000004">
    <property type="entry name" value="Elongation factor P"/>
    <property type="match status" value="1"/>
</dbReference>
<dbReference type="FunFam" id="2.30.30.30:FF:000011">
    <property type="entry name" value="Elongation factor P-like protein"/>
    <property type="match status" value="1"/>
</dbReference>
<dbReference type="Gene3D" id="2.30.30.30">
    <property type="match status" value="1"/>
</dbReference>
<dbReference type="Gene3D" id="2.40.50.140">
    <property type="entry name" value="Nucleic acid-binding proteins"/>
    <property type="match status" value="2"/>
</dbReference>
<dbReference type="HAMAP" id="MF_00646">
    <property type="entry name" value="EFP"/>
    <property type="match status" value="1"/>
</dbReference>
<dbReference type="InterPro" id="IPR015365">
    <property type="entry name" value="Elong-fact-P_C"/>
</dbReference>
<dbReference type="InterPro" id="IPR012340">
    <property type="entry name" value="NA-bd_OB-fold"/>
</dbReference>
<dbReference type="InterPro" id="IPR014722">
    <property type="entry name" value="Rib_uL2_dom2"/>
</dbReference>
<dbReference type="InterPro" id="IPR020599">
    <property type="entry name" value="Transl_elong_fac_P/YeiP"/>
</dbReference>
<dbReference type="InterPro" id="IPR013185">
    <property type="entry name" value="Transl_elong_KOW-like"/>
</dbReference>
<dbReference type="InterPro" id="IPR011897">
    <property type="entry name" value="Transl_elong_p-like_YeiP"/>
</dbReference>
<dbReference type="InterPro" id="IPR001059">
    <property type="entry name" value="Transl_elong_P/YeiP_cen"/>
</dbReference>
<dbReference type="InterPro" id="IPR013852">
    <property type="entry name" value="Transl_elong_P/YeiP_CS"/>
</dbReference>
<dbReference type="InterPro" id="IPR008991">
    <property type="entry name" value="Translation_prot_SH3-like_sf"/>
</dbReference>
<dbReference type="NCBIfam" id="NF001810">
    <property type="entry name" value="PRK00529.1"/>
    <property type="match status" value="1"/>
</dbReference>
<dbReference type="NCBIfam" id="NF003392">
    <property type="entry name" value="PRK04542.1"/>
    <property type="match status" value="1"/>
</dbReference>
<dbReference type="NCBIfam" id="TIGR02178">
    <property type="entry name" value="yeiP"/>
    <property type="match status" value="1"/>
</dbReference>
<dbReference type="PANTHER" id="PTHR30053">
    <property type="entry name" value="ELONGATION FACTOR P"/>
    <property type="match status" value="1"/>
</dbReference>
<dbReference type="PANTHER" id="PTHR30053:SF14">
    <property type="entry name" value="TRANSLATION ELONGATION FACTOR KOW-LIKE DOMAIN-CONTAINING PROTEIN"/>
    <property type="match status" value="1"/>
</dbReference>
<dbReference type="Pfam" id="PF01132">
    <property type="entry name" value="EFP"/>
    <property type="match status" value="1"/>
</dbReference>
<dbReference type="Pfam" id="PF08207">
    <property type="entry name" value="EFP_N"/>
    <property type="match status" value="1"/>
</dbReference>
<dbReference type="Pfam" id="PF09285">
    <property type="entry name" value="Elong-fact-P_C"/>
    <property type="match status" value="1"/>
</dbReference>
<dbReference type="PIRSF" id="PIRSF005901">
    <property type="entry name" value="EF-P"/>
    <property type="match status" value="1"/>
</dbReference>
<dbReference type="SMART" id="SM01185">
    <property type="entry name" value="EFP"/>
    <property type="match status" value="1"/>
</dbReference>
<dbReference type="SMART" id="SM00841">
    <property type="entry name" value="Elong-fact-P_C"/>
    <property type="match status" value="1"/>
</dbReference>
<dbReference type="SUPFAM" id="SSF50249">
    <property type="entry name" value="Nucleic acid-binding proteins"/>
    <property type="match status" value="2"/>
</dbReference>
<dbReference type="SUPFAM" id="SSF50104">
    <property type="entry name" value="Translation proteins SH3-like domain"/>
    <property type="match status" value="1"/>
</dbReference>
<dbReference type="PROSITE" id="PS01275">
    <property type="entry name" value="EFP"/>
    <property type="match status" value="1"/>
</dbReference>
<evidence type="ECO:0000255" key="1">
    <source>
        <dbReference type="HAMAP-Rule" id="MF_00646"/>
    </source>
</evidence>
<gene>
    <name type="ordered locus">VV1_3058</name>
</gene>
<sequence length="188" mass="20649">MPKASEIKKGFAIESNGKTLLVKDIEVTTPGGRGGSKIYKMRCTDLATGARVEERYKSDDVVETVEMNKKAVSFSYVDGDDYIFMDNADYSQYVFKHADVEDDLLFINEDTQGIHVILVNGESVGLELPSSVELVIEETDPSIKGASASARTKPARLSTGLVVQVPEYIATGDRVIINTAERKYMSRA</sequence>
<proteinExistence type="inferred from homology"/>